<organism>
    <name type="scientific">Staphylococcus haemolyticus (strain JCSC1435)</name>
    <dbReference type="NCBI Taxonomy" id="279808"/>
    <lineage>
        <taxon>Bacteria</taxon>
        <taxon>Bacillati</taxon>
        <taxon>Bacillota</taxon>
        <taxon>Bacilli</taxon>
        <taxon>Bacillales</taxon>
        <taxon>Staphylococcaceae</taxon>
        <taxon>Staphylococcus</taxon>
    </lineage>
</organism>
<dbReference type="EMBL" id="AP006716">
    <property type="protein sequence ID" value="BAE04240.1"/>
    <property type="molecule type" value="Genomic_DNA"/>
</dbReference>
<dbReference type="RefSeq" id="WP_011275242.1">
    <property type="nucleotide sequence ID" value="NC_007168.1"/>
</dbReference>
<dbReference type="SMR" id="Q4L7Y5"/>
<dbReference type="GeneID" id="93780319"/>
<dbReference type="KEGG" id="sha:SH0931"/>
<dbReference type="eggNOG" id="COG0224">
    <property type="taxonomic scope" value="Bacteria"/>
</dbReference>
<dbReference type="HOGENOM" id="CLU_050669_0_1_9"/>
<dbReference type="OrthoDB" id="9812769at2"/>
<dbReference type="Proteomes" id="UP000000543">
    <property type="component" value="Chromosome"/>
</dbReference>
<dbReference type="GO" id="GO:0005886">
    <property type="term" value="C:plasma membrane"/>
    <property type="evidence" value="ECO:0007669"/>
    <property type="project" value="UniProtKB-SubCell"/>
</dbReference>
<dbReference type="GO" id="GO:0045259">
    <property type="term" value="C:proton-transporting ATP synthase complex"/>
    <property type="evidence" value="ECO:0007669"/>
    <property type="project" value="UniProtKB-KW"/>
</dbReference>
<dbReference type="GO" id="GO:0005524">
    <property type="term" value="F:ATP binding"/>
    <property type="evidence" value="ECO:0007669"/>
    <property type="project" value="UniProtKB-UniRule"/>
</dbReference>
<dbReference type="GO" id="GO:0046933">
    <property type="term" value="F:proton-transporting ATP synthase activity, rotational mechanism"/>
    <property type="evidence" value="ECO:0007669"/>
    <property type="project" value="UniProtKB-UniRule"/>
</dbReference>
<dbReference type="GO" id="GO:0042777">
    <property type="term" value="P:proton motive force-driven plasma membrane ATP synthesis"/>
    <property type="evidence" value="ECO:0007669"/>
    <property type="project" value="UniProtKB-UniRule"/>
</dbReference>
<dbReference type="CDD" id="cd12151">
    <property type="entry name" value="F1-ATPase_gamma"/>
    <property type="match status" value="1"/>
</dbReference>
<dbReference type="FunFam" id="1.10.287.80:FF:000019">
    <property type="entry name" value="ATP synthase gamma chain"/>
    <property type="match status" value="1"/>
</dbReference>
<dbReference type="FunFam" id="3.40.1380.10:FF:000002">
    <property type="entry name" value="ATP synthase gamma chain"/>
    <property type="match status" value="1"/>
</dbReference>
<dbReference type="Gene3D" id="3.40.1380.10">
    <property type="match status" value="1"/>
</dbReference>
<dbReference type="Gene3D" id="1.10.287.80">
    <property type="entry name" value="ATP synthase, gamma subunit, helix hairpin domain"/>
    <property type="match status" value="1"/>
</dbReference>
<dbReference type="HAMAP" id="MF_00815">
    <property type="entry name" value="ATP_synth_gamma_bact"/>
    <property type="match status" value="1"/>
</dbReference>
<dbReference type="InterPro" id="IPR035968">
    <property type="entry name" value="ATP_synth_F1_ATPase_gsu"/>
</dbReference>
<dbReference type="InterPro" id="IPR000131">
    <property type="entry name" value="ATP_synth_F1_gsu"/>
</dbReference>
<dbReference type="NCBIfam" id="TIGR01146">
    <property type="entry name" value="ATPsyn_F1gamma"/>
    <property type="match status" value="1"/>
</dbReference>
<dbReference type="PANTHER" id="PTHR11693">
    <property type="entry name" value="ATP SYNTHASE GAMMA CHAIN"/>
    <property type="match status" value="1"/>
</dbReference>
<dbReference type="PANTHER" id="PTHR11693:SF22">
    <property type="entry name" value="ATP SYNTHASE SUBUNIT GAMMA, MITOCHONDRIAL"/>
    <property type="match status" value="1"/>
</dbReference>
<dbReference type="Pfam" id="PF00231">
    <property type="entry name" value="ATP-synt"/>
    <property type="match status" value="1"/>
</dbReference>
<dbReference type="PRINTS" id="PR00126">
    <property type="entry name" value="ATPASEGAMMA"/>
</dbReference>
<dbReference type="SUPFAM" id="SSF52943">
    <property type="entry name" value="ATP synthase (F1-ATPase), gamma subunit"/>
    <property type="match status" value="1"/>
</dbReference>
<proteinExistence type="inferred from homology"/>
<evidence type="ECO:0000255" key="1">
    <source>
        <dbReference type="HAMAP-Rule" id="MF_00815"/>
    </source>
</evidence>
<feature type="chain" id="PRO_0000073381" description="ATP synthase gamma chain">
    <location>
        <begin position="1"/>
        <end position="288"/>
    </location>
</feature>
<comment type="function">
    <text evidence="1">Produces ATP from ADP in the presence of a proton gradient across the membrane. The gamma chain is believed to be important in regulating ATPase activity and the flow of protons through the CF(0) complex.</text>
</comment>
<comment type="subunit">
    <text evidence="1">F-type ATPases have 2 components, CF(1) - the catalytic core - and CF(0) - the membrane proton channel. CF(1) has five subunits: alpha(3), beta(3), gamma(1), delta(1), epsilon(1). CF(0) has three main subunits: a, b and c.</text>
</comment>
<comment type="subcellular location">
    <subcellularLocation>
        <location evidence="1">Cell membrane</location>
        <topology evidence="1">Peripheral membrane protein</topology>
    </subcellularLocation>
</comment>
<comment type="similarity">
    <text evidence="1">Belongs to the ATPase gamma chain family.</text>
</comment>
<gene>
    <name evidence="1" type="primary">atpG</name>
    <name type="ordered locus">SH0931</name>
</gene>
<keyword id="KW-0066">ATP synthesis</keyword>
<keyword id="KW-1003">Cell membrane</keyword>
<keyword id="KW-0139">CF(1)</keyword>
<keyword id="KW-0375">Hydrogen ion transport</keyword>
<keyword id="KW-0406">Ion transport</keyword>
<keyword id="KW-0472">Membrane</keyword>
<keyword id="KW-0813">Transport</keyword>
<sequence>MASLKEIDGRIKSTKKMKQITKAMNMVSSSKLRRAEKNTKQFEPYMEKMQDAITAIAGASKNSSHPMLRPRQVQRSGYLVITSDKGLAGAYSSNVLKRLINDIKEKHTSSDEYSIIVLGQSGVDFLKNRGYEIENSLVDVPDQPSFKSIQAIAKHAIDLFSEEHIDELKIYYSHYVSVLENKPTTKQVLPLSREDSSQGQGQMSSYEFEPDKESILSVILPQYVESLIYGTILDAKASEHAARMTAMKNASDNATELIDDLSLQYNRARQAEITQQITEIVGGSAALE</sequence>
<name>ATPG_STAHJ</name>
<protein>
    <recommendedName>
        <fullName evidence="1">ATP synthase gamma chain</fullName>
    </recommendedName>
    <alternativeName>
        <fullName evidence="1">ATP synthase F1 sector gamma subunit</fullName>
    </alternativeName>
    <alternativeName>
        <fullName evidence="1">F-ATPase gamma subunit</fullName>
    </alternativeName>
</protein>
<accession>Q4L7Y5</accession>
<reference key="1">
    <citation type="journal article" date="2005" name="J. Bacteriol.">
        <title>Whole-genome sequencing of Staphylococcus haemolyticus uncovers the extreme plasticity of its genome and the evolution of human-colonizing staphylococcal species.</title>
        <authorList>
            <person name="Takeuchi F."/>
            <person name="Watanabe S."/>
            <person name="Baba T."/>
            <person name="Yuzawa H."/>
            <person name="Ito T."/>
            <person name="Morimoto Y."/>
            <person name="Kuroda M."/>
            <person name="Cui L."/>
            <person name="Takahashi M."/>
            <person name="Ankai A."/>
            <person name="Baba S."/>
            <person name="Fukui S."/>
            <person name="Lee J.C."/>
            <person name="Hiramatsu K."/>
        </authorList>
    </citation>
    <scope>NUCLEOTIDE SEQUENCE [LARGE SCALE GENOMIC DNA]</scope>
    <source>
        <strain>JCSC1435</strain>
    </source>
</reference>